<organism>
    <name type="scientific">Methylobacterium sp. (strain 4-46)</name>
    <dbReference type="NCBI Taxonomy" id="426117"/>
    <lineage>
        <taxon>Bacteria</taxon>
        <taxon>Pseudomonadati</taxon>
        <taxon>Pseudomonadota</taxon>
        <taxon>Alphaproteobacteria</taxon>
        <taxon>Hyphomicrobiales</taxon>
        <taxon>Methylobacteriaceae</taxon>
        <taxon>Methylobacterium</taxon>
    </lineage>
</organism>
<protein>
    <recommendedName>
        <fullName evidence="1">tRNA-specific 2-thiouridylase MnmA</fullName>
        <ecNumber evidence="1">2.8.1.13</ecNumber>
    </recommendedName>
</protein>
<gene>
    <name evidence="1" type="primary">mnmA</name>
    <name type="ordered locus">M446_5118</name>
</gene>
<feature type="chain" id="PRO_0000349699" description="tRNA-specific 2-thiouridylase MnmA">
    <location>
        <begin position="1"/>
        <end position="382"/>
    </location>
</feature>
<feature type="region of interest" description="Interaction with tRNA" evidence="1">
    <location>
        <begin position="159"/>
        <end position="161"/>
    </location>
</feature>
<feature type="active site" description="Nucleophile" evidence="1">
    <location>
        <position position="112"/>
    </location>
</feature>
<feature type="active site" description="Cysteine persulfide intermediate" evidence="1">
    <location>
        <position position="209"/>
    </location>
</feature>
<feature type="binding site" evidence="1">
    <location>
        <begin position="18"/>
        <end position="25"/>
    </location>
    <ligand>
        <name>ATP</name>
        <dbReference type="ChEBI" id="CHEBI:30616"/>
    </ligand>
</feature>
<feature type="binding site" evidence="1">
    <location>
        <position position="44"/>
    </location>
    <ligand>
        <name>ATP</name>
        <dbReference type="ChEBI" id="CHEBI:30616"/>
    </ligand>
</feature>
<feature type="binding site" evidence="1">
    <location>
        <position position="136"/>
    </location>
    <ligand>
        <name>ATP</name>
        <dbReference type="ChEBI" id="CHEBI:30616"/>
    </ligand>
</feature>
<feature type="site" description="Interaction with tRNA" evidence="1">
    <location>
        <position position="137"/>
    </location>
</feature>
<feature type="site" description="Interaction with tRNA" evidence="1">
    <location>
        <position position="351"/>
    </location>
</feature>
<feature type="disulfide bond" description="Alternate" evidence="1">
    <location>
        <begin position="112"/>
        <end position="209"/>
    </location>
</feature>
<dbReference type="EC" id="2.8.1.13" evidence="1"/>
<dbReference type="EMBL" id="CP000943">
    <property type="protein sequence ID" value="ACA19444.1"/>
    <property type="molecule type" value="Genomic_DNA"/>
</dbReference>
<dbReference type="RefSeq" id="WP_012334830.1">
    <property type="nucleotide sequence ID" value="NC_010511.1"/>
</dbReference>
<dbReference type="SMR" id="B0UIW7"/>
<dbReference type="STRING" id="426117.M446_5118"/>
<dbReference type="KEGG" id="met:M446_5118"/>
<dbReference type="eggNOG" id="COG0482">
    <property type="taxonomic scope" value="Bacteria"/>
</dbReference>
<dbReference type="HOGENOM" id="CLU_035188_0_1_5"/>
<dbReference type="GO" id="GO:0005737">
    <property type="term" value="C:cytoplasm"/>
    <property type="evidence" value="ECO:0007669"/>
    <property type="project" value="UniProtKB-SubCell"/>
</dbReference>
<dbReference type="GO" id="GO:0005524">
    <property type="term" value="F:ATP binding"/>
    <property type="evidence" value="ECO:0007669"/>
    <property type="project" value="UniProtKB-KW"/>
</dbReference>
<dbReference type="GO" id="GO:0000049">
    <property type="term" value="F:tRNA binding"/>
    <property type="evidence" value="ECO:0007669"/>
    <property type="project" value="UniProtKB-KW"/>
</dbReference>
<dbReference type="GO" id="GO:0103016">
    <property type="term" value="F:tRNA-uridine 2-sulfurtransferase activity"/>
    <property type="evidence" value="ECO:0007669"/>
    <property type="project" value="UniProtKB-EC"/>
</dbReference>
<dbReference type="GO" id="GO:0002143">
    <property type="term" value="P:tRNA wobble position uridine thiolation"/>
    <property type="evidence" value="ECO:0007669"/>
    <property type="project" value="TreeGrafter"/>
</dbReference>
<dbReference type="CDD" id="cd01998">
    <property type="entry name" value="MnmA_TRMU-like"/>
    <property type="match status" value="1"/>
</dbReference>
<dbReference type="FunFam" id="2.30.30.280:FF:000001">
    <property type="entry name" value="tRNA-specific 2-thiouridylase MnmA"/>
    <property type="match status" value="1"/>
</dbReference>
<dbReference type="FunFam" id="3.40.50.620:FF:000115">
    <property type="entry name" value="tRNA-specific 2-thiouridylase MnmA"/>
    <property type="match status" value="1"/>
</dbReference>
<dbReference type="Gene3D" id="2.30.30.280">
    <property type="entry name" value="Adenine nucleotide alpha hydrolases-like domains"/>
    <property type="match status" value="1"/>
</dbReference>
<dbReference type="Gene3D" id="3.40.50.620">
    <property type="entry name" value="HUPs"/>
    <property type="match status" value="1"/>
</dbReference>
<dbReference type="Gene3D" id="2.40.30.10">
    <property type="entry name" value="Translation factors"/>
    <property type="match status" value="1"/>
</dbReference>
<dbReference type="HAMAP" id="MF_00144">
    <property type="entry name" value="tRNA_thiouridyl_MnmA"/>
    <property type="match status" value="1"/>
</dbReference>
<dbReference type="InterPro" id="IPR004506">
    <property type="entry name" value="MnmA-like"/>
</dbReference>
<dbReference type="InterPro" id="IPR046885">
    <property type="entry name" value="MnmA-like_C"/>
</dbReference>
<dbReference type="InterPro" id="IPR046884">
    <property type="entry name" value="MnmA-like_central"/>
</dbReference>
<dbReference type="InterPro" id="IPR023382">
    <property type="entry name" value="MnmA-like_central_sf"/>
</dbReference>
<dbReference type="InterPro" id="IPR014729">
    <property type="entry name" value="Rossmann-like_a/b/a_fold"/>
</dbReference>
<dbReference type="NCBIfam" id="NF001138">
    <property type="entry name" value="PRK00143.1"/>
    <property type="match status" value="1"/>
</dbReference>
<dbReference type="NCBIfam" id="TIGR00420">
    <property type="entry name" value="trmU"/>
    <property type="match status" value="1"/>
</dbReference>
<dbReference type="PANTHER" id="PTHR11933:SF5">
    <property type="entry name" value="MITOCHONDRIAL TRNA-SPECIFIC 2-THIOURIDYLASE 1"/>
    <property type="match status" value="1"/>
</dbReference>
<dbReference type="PANTHER" id="PTHR11933">
    <property type="entry name" value="TRNA 5-METHYLAMINOMETHYL-2-THIOURIDYLATE -METHYLTRANSFERASE"/>
    <property type="match status" value="1"/>
</dbReference>
<dbReference type="Pfam" id="PF03054">
    <property type="entry name" value="tRNA_Me_trans"/>
    <property type="match status" value="1"/>
</dbReference>
<dbReference type="Pfam" id="PF20258">
    <property type="entry name" value="tRNA_Me_trans_C"/>
    <property type="match status" value="1"/>
</dbReference>
<dbReference type="Pfam" id="PF20259">
    <property type="entry name" value="tRNA_Me_trans_M"/>
    <property type="match status" value="1"/>
</dbReference>
<dbReference type="SUPFAM" id="SSF52402">
    <property type="entry name" value="Adenine nucleotide alpha hydrolases-like"/>
    <property type="match status" value="1"/>
</dbReference>
<comment type="function">
    <text evidence="1">Catalyzes the 2-thiolation of uridine at the wobble position (U34) of tRNA, leading to the formation of s(2)U34.</text>
</comment>
<comment type="catalytic activity">
    <reaction evidence="1">
        <text>S-sulfanyl-L-cysteinyl-[protein] + uridine(34) in tRNA + AH2 + ATP = 2-thiouridine(34) in tRNA + L-cysteinyl-[protein] + A + AMP + diphosphate + H(+)</text>
        <dbReference type="Rhea" id="RHEA:47032"/>
        <dbReference type="Rhea" id="RHEA-COMP:10131"/>
        <dbReference type="Rhea" id="RHEA-COMP:11726"/>
        <dbReference type="Rhea" id="RHEA-COMP:11727"/>
        <dbReference type="Rhea" id="RHEA-COMP:11728"/>
        <dbReference type="ChEBI" id="CHEBI:13193"/>
        <dbReference type="ChEBI" id="CHEBI:15378"/>
        <dbReference type="ChEBI" id="CHEBI:17499"/>
        <dbReference type="ChEBI" id="CHEBI:29950"/>
        <dbReference type="ChEBI" id="CHEBI:30616"/>
        <dbReference type="ChEBI" id="CHEBI:33019"/>
        <dbReference type="ChEBI" id="CHEBI:61963"/>
        <dbReference type="ChEBI" id="CHEBI:65315"/>
        <dbReference type="ChEBI" id="CHEBI:87170"/>
        <dbReference type="ChEBI" id="CHEBI:456215"/>
        <dbReference type="EC" id="2.8.1.13"/>
    </reaction>
</comment>
<comment type="subcellular location">
    <subcellularLocation>
        <location evidence="1">Cytoplasm</location>
    </subcellularLocation>
</comment>
<comment type="similarity">
    <text evidence="1">Belongs to the MnmA/TRMU family.</text>
</comment>
<keyword id="KW-0067">ATP-binding</keyword>
<keyword id="KW-0963">Cytoplasm</keyword>
<keyword id="KW-1015">Disulfide bond</keyword>
<keyword id="KW-0547">Nucleotide-binding</keyword>
<keyword id="KW-0694">RNA-binding</keyword>
<keyword id="KW-0808">Transferase</keyword>
<keyword id="KW-0819">tRNA processing</keyword>
<keyword id="KW-0820">tRNA-binding</keyword>
<sequence>MNSLDLPKAPQDTRVVVAMSGGVDSSVVAGLLRRQGYDVVGITLQLYDHGAATHRRGACCAGQDIHDARRAAETLGIPHYVLDYEDRFREAVIDRFAESYIHGETPIPCVECNRSIKFRDLLATALDLGADALATGHYVASRARPGGGRALYRALDPARDQSYFLYATTPEQLDVLRFPLGELPKDETRRLAREFGLAVADKPDSQDICFVPQGRYQDVIARLRPDAARPGEIVHLDGRTLGRHEGIIGFTVGQRRGLGLATGEPLYVVRLDPETARVVVGPREALATSVIRIAETNWLGDEPLADLDGMPVAVRVRSTREPRPAALRWNRALACAEVVLETPEDGVSPGQACAIYADDGPRARVLGGGTIQKVEAARREAA</sequence>
<reference key="1">
    <citation type="submission" date="2008-02" db="EMBL/GenBank/DDBJ databases">
        <title>Complete sequence of chromosome of Methylobacterium sp. 4-46.</title>
        <authorList>
            <consortium name="US DOE Joint Genome Institute"/>
            <person name="Copeland A."/>
            <person name="Lucas S."/>
            <person name="Lapidus A."/>
            <person name="Glavina del Rio T."/>
            <person name="Dalin E."/>
            <person name="Tice H."/>
            <person name="Bruce D."/>
            <person name="Goodwin L."/>
            <person name="Pitluck S."/>
            <person name="Chertkov O."/>
            <person name="Brettin T."/>
            <person name="Detter J.C."/>
            <person name="Han C."/>
            <person name="Kuske C.R."/>
            <person name="Schmutz J."/>
            <person name="Larimer F."/>
            <person name="Land M."/>
            <person name="Hauser L."/>
            <person name="Kyrpides N."/>
            <person name="Ivanova N."/>
            <person name="Marx C.J."/>
            <person name="Richardson P."/>
        </authorList>
    </citation>
    <scope>NUCLEOTIDE SEQUENCE [LARGE SCALE GENOMIC DNA]</scope>
    <source>
        <strain>4-46</strain>
    </source>
</reference>
<evidence type="ECO:0000255" key="1">
    <source>
        <dbReference type="HAMAP-Rule" id="MF_00144"/>
    </source>
</evidence>
<proteinExistence type="inferred from homology"/>
<accession>B0UIW7</accession>
<name>MNMA_METS4</name>